<name>SLAPH_BRECH</name>
<protein>
    <recommendedName>
        <fullName>Surface layer protein</fullName>
    </recommendedName>
    <alternativeName>
        <fullName>Hexagonal wall protein</fullName>
        <shortName>HWP</shortName>
    </alternativeName>
</protein>
<reference key="1">
    <citation type="journal article" date="1990" name="J. Bacteriol.">
        <title>Conserved structures of cell wall protein genes among protein-producing Bacillus brevis strains.</title>
        <authorList>
            <person name="Ebisu S."/>
            <person name="Tsuboi A."/>
            <person name="Takagi H."/>
            <person name="Naruse Y."/>
            <person name="Yamagata H."/>
            <person name="Tsukagoshi N."/>
            <person name="Udaka S."/>
        </authorList>
    </citation>
    <scope>NUCLEOTIDE SEQUENCE [GENOMIC DNA]</scope>
    <scope>PROTEIN SEQUENCE OF 54-68</scope>
    <source>
        <strain>HPD31</strain>
    </source>
</reference>
<organism>
    <name type="scientific">Brevibacillus choshinensis</name>
    <dbReference type="NCBI Taxonomy" id="54911"/>
    <lineage>
        <taxon>Bacteria</taxon>
        <taxon>Bacillati</taxon>
        <taxon>Bacillota</taxon>
        <taxon>Bacilli</taxon>
        <taxon>Bacillales</taxon>
        <taxon>Paenibacillaceae</taxon>
        <taxon>Brevibacillus</taxon>
    </lineage>
</organism>
<proteinExistence type="evidence at protein level"/>
<evidence type="ECO:0000255" key="1">
    <source>
        <dbReference type="PROSITE-ProRule" id="PRU00777"/>
    </source>
</evidence>
<evidence type="ECO:0000269" key="2">
    <source>
    </source>
</evidence>
<sequence length="1116" mass="123397">MQDSGFKKKDRSTNIPQEQFVYTRGGEHKVMKKVVNSVLASALAITVAPMAFAAEDTTTAPKMDAAMEKTVKRLEALGLVAGYGNGDFGADKTITRAEFATLIVRARGLEQGAKLAQFNTTYTDVRSTDWFAGFVNVASGEEIVKGFPDKSFKPQNQVTYAEAVTMIVRALGYEPSVRGVWPNSMISKGSELNIAKGINNPNMQQFAATIFKMLDNALRVKLMEQIEYGTDIRLNVTDETLLTKYLKVTVRDMDWAHEKGNNSDELPLVTNVPAIGLGSLKANEVTLNGKDADLGSNTTYKVAEGINPNAFDGQKVQVWIKDDRENVIVWMEGSEDEDVVMDRVSALYLKGKAFTDDIVKDLSKSDLDDVKIEMDGSEKSYRLTEDTKITYNFTRFNDPVDALSKIYKDNDTFGVKVVLNDNNEVAYLHIIDDQTIDKSVKGVKYGSKVISKIDADKKKITNLDNSKFSDLEDQDEGKDFLVFLDGQPAKLGDLKESDVYSVYYADGDKDKYLVFANRNVAEGKVEKVVSRNKTDIRLTVGGKTYKVYPDASYSENANKDVKKVNSDLDLISNLDGEEVKLLLDPSGRVRHIETKDAIDDRKPLAIITKGATYNSSKDTYDFTVMTQKGKTQIVSLDQKDIYDRYGVNYDKSNDKRQAFEKDLVELLQPKVVKEDSATDANQTVLLEVNFDSKGEVDKVKVLDSKLKYSEKSTWDKLADEDDDVVGDYEVTDKTAVFKMTGDLTPATGTKRGELKNAGTAKFKDVAKKSDLKVWYSVDEDKGEVQAIFVVDGSGLGGDHQFGMVKQYGTASKQDTITIVTKDGDSVTEKEYKLDGDADDLKVDQDIRRGDVISFTLNSDGEVIVDDVVEVVNNNHIDNTASKSATLMPEDERQKAGIDKLVVARVDEVDGNTISLNYADGKTQKYYTKASTAFIDVYDGLEGIDGVDEGDYIVMIDSADIDGTRFDYVLVVSSDDEIRTQHISTKAVTDFLNKPTRLCTKSWRWGRSSHGTKVNTVNDEAVVDGIVTLPADASVRNFNIAFDQEINSKDATVTVTNEDTLGNVTVSEVATDAKVLSFKTAKLDTTKTYIITVKGLKDKNGKAVKDVTLYVEFVAGV</sequence>
<accession>P38538</accession>
<dbReference type="EMBL" id="D90050">
    <property type="protein sequence ID" value="BAA14103.1"/>
    <property type="molecule type" value="Genomic_DNA"/>
</dbReference>
<dbReference type="SMR" id="P38538"/>
<dbReference type="GO" id="GO:0005576">
    <property type="term" value="C:extracellular region"/>
    <property type="evidence" value="ECO:0007669"/>
    <property type="project" value="UniProtKB-KW"/>
</dbReference>
<dbReference type="GO" id="GO:0030115">
    <property type="term" value="C:S-layer"/>
    <property type="evidence" value="ECO:0007669"/>
    <property type="project" value="UniProtKB-SubCell"/>
</dbReference>
<dbReference type="InterPro" id="IPR001119">
    <property type="entry name" value="SLH_dom"/>
</dbReference>
<dbReference type="Pfam" id="PF00395">
    <property type="entry name" value="SLH"/>
    <property type="match status" value="2"/>
</dbReference>
<dbReference type="PROSITE" id="PS51272">
    <property type="entry name" value="SLH"/>
    <property type="match status" value="2"/>
</dbReference>
<feature type="signal peptide" evidence="2">
    <location>
        <begin position="1"/>
        <end position="53"/>
    </location>
</feature>
<feature type="chain" id="PRO_0000032644" description="Surface layer protein">
    <location>
        <begin position="54"/>
        <end position="1116"/>
    </location>
</feature>
<feature type="domain" description="SLH 1" evidence="1">
    <location>
        <begin position="54"/>
        <end position="117"/>
    </location>
</feature>
<feature type="domain" description="SLH 2" evidence="1">
    <location>
        <begin position="118"/>
        <end position="181"/>
    </location>
</feature>
<feature type="domain" description="SLH 3" evidence="1">
    <location>
        <begin position="182"/>
        <end position="231"/>
    </location>
</feature>
<keyword id="KW-0134">Cell wall</keyword>
<keyword id="KW-0903">Direct protein sequencing</keyword>
<keyword id="KW-0677">Repeat</keyword>
<keyword id="KW-0701">S-layer</keyword>
<keyword id="KW-0964">Secreted</keyword>
<keyword id="KW-0732">Signal</keyword>
<comment type="subcellular location">
    <subcellularLocation>
        <location>Secreted</location>
        <location>Cell wall</location>
        <location>S-layer</location>
    </subcellularLocation>
    <text>This bacterium is covered by a S-layer with hexagonal symmetry.</text>
</comment>